<dbReference type="EC" id="1.1.3.17"/>
<dbReference type="EMBL" id="X84895">
    <property type="protein sequence ID" value="CAA59321.2"/>
    <property type="molecule type" value="Genomic_DNA"/>
</dbReference>
<dbReference type="EMBL" id="AY304485">
    <property type="protein sequence ID" value="AAP68832.1"/>
    <property type="molecule type" value="Genomic_DNA"/>
</dbReference>
<dbReference type="EMBL" id="AY589052">
    <property type="protein sequence ID" value="AAS99880.1"/>
    <property type="molecule type" value="Genomic_DNA"/>
</dbReference>
<dbReference type="PIR" id="S62689">
    <property type="entry name" value="S52489"/>
</dbReference>
<dbReference type="PDB" id="2JBV">
    <property type="method" value="X-ray"/>
    <property type="resolution" value="1.86 A"/>
    <property type="chains" value="A/B=1-546"/>
</dbReference>
<dbReference type="PDB" id="3LJP">
    <property type="method" value="X-ray"/>
    <property type="resolution" value="2.20 A"/>
    <property type="chains" value="A/B=1-546"/>
</dbReference>
<dbReference type="PDB" id="3NNE">
    <property type="method" value="X-ray"/>
    <property type="resolution" value="2.47 A"/>
    <property type="chains" value="A/B/C/D/E/F/G/H=1-546"/>
</dbReference>
<dbReference type="PDB" id="4MJW">
    <property type="method" value="X-ray"/>
    <property type="resolution" value="1.95 A"/>
    <property type="chains" value="A/B=1-546"/>
</dbReference>
<dbReference type="PDBsum" id="2JBV"/>
<dbReference type="PDBsum" id="3LJP"/>
<dbReference type="PDBsum" id="3NNE"/>
<dbReference type="PDBsum" id="4MJW"/>
<dbReference type="SMR" id="Q7X2H8"/>
<dbReference type="KEGG" id="ag:AAP68832"/>
<dbReference type="BioCyc" id="MetaCyc:MONOMER-8608"/>
<dbReference type="BRENDA" id="1.1.3.17">
    <property type="organism ID" value="444"/>
</dbReference>
<dbReference type="SABIO-RK" id="Q7X2H8"/>
<dbReference type="UniPathway" id="UPA00529">
    <property type="reaction ID" value="UER00384"/>
</dbReference>
<dbReference type="EvolutionaryTrace" id="Q7X2H8"/>
<dbReference type="GO" id="GO:0033713">
    <property type="term" value="F:choline:oxygen 1-oxidoreductase activity"/>
    <property type="evidence" value="ECO:0007669"/>
    <property type="project" value="UniProtKB-EC"/>
</dbReference>
<dbReference type="GO" id="GO:0050660">
    <property type="term" value="F:flavin adenine dinucleotide binding"/>
    <property type="evidence" value="ECO:0007669"/>
    <property type="project" value="InterPro"/>
</dbReference>
<dbReference type="GO" id="GO:0019285">
    <property type="term" value="P:glycine betaine biosynthetic process from choline"/>
    <property type="evidence" value="ECO:0007669"/>
    <property type="project" value="UniProtKB-UniPathway"/>
</dbReference>
<dbReference type="Gene3D" id="3.30.410.40">
    <property type="match status" value="1"/>
</dbReference>
<dbReference type="Gene3D" id="3.50.50.60">
    <property type="entry name" value="FAD/NAD(P)-binding domain"/>
    <property type="match status" value="1"/>
</dbReference>
<dbReference type="InterPro" id="IPR036188">
    <property type="entry name" value="FAD/NAD-bd_sf"/>
</dbReference>
<dbReference type="InterPro" id="IPR012132">
    <property type="entry name" value="GMC_OxRdtase"/>
</dbReference>
<dbReference type="InterPro" id="IPR000172">
    <property type="entry name" value="GMC_OxRdtase_N"/>
</dbReference>
<dbReference type="InterPro" id="IPR007867">
    <property type="entry name" value="GMC_OxRtase_C"/>
</dbReference>
<dbReference type="PANTHER" id="PTHR11552">
    <property type="entry name" value="GLUCOSE-METHANOL-CHOLINE GMC OXIDOREDUCTASE"/>
    <property type="match status" value="1"/>
</dbReference>
<dbReference type="PANTHER" id="PTHR11552:SF152">
    <property type="entry name" value="OXIDASE (CODA), PUTATIVE (AFU_ORTHOLOGUE AFUA_8G04090)-RELATED"/>
    <property type="match status" value="1"/>
</dbReference>
<dbReference type="Pfam" id="PF05199">
    <property type="entry name" value="GMC_oxred_C"/>
    <property type="match status" value="1"/>
</dbReference>
<dbReference type="Pfam" id="PF00732">
    <property type="entry name" value="GMC_oxred_N"/>
    <property type="match status" value="1"/>
</dbReference>
<dbReference type="PIRSF" id="PIRSF000137">
    <property type="entry name" value="Alcohol_oxidase"/>
    <property type="match status" value="1"/>
</dbReference>
<dbReference type="SUPFAM" id="SSF54373">
    <property type="entry name" value="FAD-linked reductases, C-terminal domain"/>
    <property type="match status" value="1"/>
</dbReference>
<dbReference type="SUPFAM" id="SSF51905">
    <property type="entry name" value="FAD/NAD(P)-binding domain"/>
    <property type="match status" value="1"/>
</dbReference>
<dbReference type="PROSITE" id="PS00624">
    <property type="entry name" value="GMC_OXRED_2"/>
    <property type="match status" value="1"/>
</dbReference>
<sequence>MHIDNIENLSDREFDYIVVGGGSAGAAVAARLSEDPAVSVALVEAGPDDRGVPEVLQLDRWMELLESGYDWDYPIEPQENGNSFMRHARAKVMGGCSSHNSCIAFWAPREDLDEWEAKYGATGWNAEAAWPLYKRLETNEDAGPDAPHHGDSGPVHLMNVPPKDPTGVALLDACEQAGIPRAKFNTGTTVVNGANFFQINRRADGTRSSSSVSYIHPIVEQENFTLLTGLRARQLVFDADRRCTGVDIVDSAFGHTHRLTARNEVVLSTGAIDTPKLLMLSGIGPAAHLAEHGIEVLVDSPGVGEHLQDHPEGVVQFEAKQPMVAESTQWWEIGIFTPTEDGLDRPDLMMHYGSVPFDMNTLRHGYPTTENGFSLTPNVTHARSRGTVRLRSRDFRDKPMVDPRYFTDPEGHDMRVMVAGIRKAREIAAQPAMAEWTGRELSPGVEAQTDEELQDYIRKTHNTVYHPVGTVRMGAVEDEMSPLDPELRVKGVTGLRVADASVMPEHVTVNPNITVMMIGERCADLIRSARAGETTTADAELSAALA</sequence>
<feature type="chain" id="PRO_0000418899" description="Choline oxidase">
    <location>
        <begin position="1"/>
        <end position="546"/>
    </location>
</feature>
<feature type="active site" description="Proton acceptor" evidence="1">
    <location>
        <position position="466"/>
    </location>
</feature>
<feature type="binding site">
    <location>
        <begin position="23"/>
        <end position="24"/>
    </location>
    <ligand>
        <name>FAD</name>
        <dbReference type="ChEBI" id="CHEBI:57692"/>
    </ligand>
</feature>
<feature type="binding site">
    <location>
        <position position="44"/>
    </location>
    <ligand>
        <name>FAD</name>
        <dbReference type="ChEBI" id="CHEBI:57692"/>
    </ligand>
</feature>
<feature type="binding site">
    <location>
        <position position="71"/>
    </location>
    <ligand>
        <name>FAD</name>
        <dbReference type="ChEBI" id="CHEBI:57692"/>
    </ligand>
</feature>
<feature type="binding site">
    <location>
        <begin position="90"/>
        <end position="92"/>
    </location>
    <ligand>
        <name>FAD</name>
        <dbReference type="ChEBI" id="CHEBI:57692"/>
    </ligand>
</feature>
<feature type="binding site">
    <location>
        <begin position="96"/>
        <end position="103"/>
    </location>
    <ligand>
        <name>FAD</name>
        <dbReference type="ChEBI" id="CHEBI:57692"/>
    </ligand>
</feature>
<feature type="binding site">
    <location>
        <position position="232"/>
    </location>
    <ligand>
        <name>FAD</name>
        <dbReference type="ChEBI" id="CHEBI:57692"/>
    </ligand>
</feature>
<feature type="binding site">
    <location>
        <position position="465"/>
    </location>
    <ligand>
        <name>FAD</name>
        <dbReference type="ChEBI" id="CHEBI:57692"/>
    </ligand>
</feature>
<feature type="binding site">
    <location>
        <position position="500"/>
    </location>
    <ligand>
        <name>FAD</name>
        <dbReference type="ChEBI" id="CHEBI:57692"/>
    </ligand>
</feature>
<feature type="binding site">
    <location>
        <begin position="510"/>
        <end position="512"/>
    </location>
    <ligand>
        <name>FAD</name>
        <dbReference type="ChEBI" id="CHEBI:57692"/>
    </ligand>
</feature>
<feature type="modified residue" description="Tele-8alpha-FAD histidine">
    <location>
        <position position="99"/>
    </location>
</feature>
<feature type="mutagenesis site" description="Increased efficiencies in the oxidative half-reactions and decreased efficiencies in the reductive half-reactions.">
    <original>S</original>
    <variation>A</variation>
    <location>
        <position position="101"/>
    </location>
</feature>
<feature type="mutagenesis site" description="Abolishes enzymatic activity.">
    <original>E</original>
    <variation>A</variation>
    <location>
        <position position="312"/>
    </location>
</feature>
<feature type="mutagenesis site" description="Reduces catalytic efficiency 230-fold.">
    <original>E</original>
    <variation>D</variation>
    <location>
        <position position="312"/>
    </location>
</feature>
<feature type="mutagenesis site" description="Reduces affinity for choline 500-fold.">
    <original>E</original>
    <variation>Q</variation>
    <location>
        <position position="312"/>
    </location>
</feature>
<feature type="mutagenesis site" description="Results in a 2-fold decrease in the limiting rate constant for flavin reduction. Has no effect on substrate binding.">
    <original>V</original>
    <variation>A</variation>
    <location>
        <position position="464"/>
    </location>
</feature>
<feature type="sequence conflict" description="In Ref. 1; CAA59321 and 3; AAS99880." evidence="4" ref="1 3">
    <original>H</original>
    <variation>R</variation>
    <location>
        <position position="255"/>
    </location>
</feature>
<feature type="strand" evidence="5">
    <location>
        <begin position="2"/>
        <end position="4"/>
    </location>
</feature>
<feature type="helix" evidence="5">
    <location>
        <begin position="6"/>
        <end position="8"/>
    </location>
</feature>
<feature type="strand" evidence="5">
    <location>
        <begin position="13"/>
        <end position="19"/>
    </location>
</feature>
<feature type="helix" evidence="5">
    <location>
        <begin position="23"/>
        <end position="32"/>
    </location>
</feature>
<feature type="strand" evidence="5">
    <location>
        <begin position="40"/>
        <end position="43"/>
    </location>
</feature>
<feature type="helix" evidence="5">
    <location>
        <begin position="53"/>
        <end position="56"/>
    </location>
</feature>
<feature type="helix" evidence="5">
    <location>
        <begin position="58"/>
        <end position="64"/>
    </location>
</feature>
<feature type="strand" evidence="5">
    <location>
        <begin position="73"/>
        <end position="75"/>
    </location>
</feature>
<feature type="strand" evidence="5">
    <location>
        <begin position="79"/>
        <end position="81"/>
    </location>
</feature>
<feature type="helix" evidence="5">
    <location>
        <begin position="95"/>
        <end position="98"/>
    </location>
</feature>
<feature type="helix" evidence="5">
    <location>
        <begin position="109"/>
        <end position="117"/>
    </location>
</feature>
<feature type="helix" evidence="5">
    <location>
        <begin position="126"/>
        <end position="136"/>
    </location>
</feature>
<feature type="strand" evidence="5">
    <location>
        <begin position="137"/>
        <end position="139"/>
    </location>
</feature>
<feature type="strand" evidence="5">
    <location>
        <begin position="154"/>
        <end position="159"/>
    </location>
</feature>
<feature type="helix" evidence="5">
    <location>
        <begin position="165"/>
        <end position="176"/>
    </location>
</feature>
<feature type="strand" evidence="5">
    <location>
        <begin position="184"/>
        <end position="188"/>
    </location>
</feature>
<feature type="strand" evidence="5">
    <location>
        <begin position="191"/>
        <end position="196"/>
    </location>
</feature>
<feature type="strand" evidence="6">
    <location>
        <begin position="198"/>
        <end position="201"/>
    </location>
</feature>
<feature type="strand" evidence="5">
    <location>
        <begin position="205"/>
        <end position="207"/>
    </location>
</feature>
<feature type="helix" evidence="5">
    <location>
        <begin position="210"/>
        <end position="214"/>
    </location>
</feature>
<feature type="helix" evidence="5">
    <location>
        <begin position="216"/>
        <end position="218"/>
    </location>
</feature>
<feature type="strand" evidence="5">
    <location>
        <begin position="224"/>
        <end position="227"/>
    </location>
</feature>
<feature type="strand" evidence="5">
    <location>
        <begin position="231"/>
        <end position="237"/>
    </location>
</feature>
<feature type="strand" evidence="5">
    <location>
        <begin position="241"/>
        <end position="251"/>
    </location>
</feature>
<feature type="strand" evidence="5">
    <location>
        <begin position="256"/>
        <end position="267"/>
    </location>
</feature>
<feature type="helix" evidence="5">
    <location>
        <begin position="270"/>
        <end position="280"/>
    </location>
</feature>
<feature type="helix" evidence="5">
    <location>
        <begin position="286"/>
        <end position="291"/>
    </location>
</feature>
<feature type="strand" evidence="5">
    <location>
        <begin position="297"/>
        <end position="299"/>
    </location>
</feature>
<feature type="turn" evidence="5">
    <location>
        <begin position="301"/>
        <end position="304"/>
    </location>
</feature>
<feature type="strand" evidence="5">
    <location>
        <begin position="306"/>
        <end position="308"/>
    </location>
</feature>
<feature type="strand" evidence="5">
    <location>
        <begin position="315"/>
        <end position="321"/>
    </location>
</feature>
<feature type="strand" evidence="5">
    <location>
        <begin position="328"/>
        <end position="330"/>
    </location>
</feature>
<feature type="strand" evidence="5">
    <location>
        <begin position="333"/>
        <end position="337"/>
    </location>
</feature>
<feature type="strand" evidence="8">
    <location>
        <begin position="339"/>
        <end position="342"/>
    </location>
</feature>
<feature type="strand" evidence="5">
    <location>
        <begin position="347"/>
        <end position="355"/>
    </location>
</feature>
<feature type="turn" evidence="5">
    <location>
        <begin position="359"/>
        <end position="361"/>
    </location>
</feature>
<feature type="helix" evidence="5">
    <location>
        <begin position="362"/>
        <end position="364"/>
    </location>
</feature>
<feature type="strand" evidence="5">
    <location>
        <begin position="370"/>
        <end position="379"/>
    </location>
</feature>
<feature type="strand" evidence="5">
    <location>
        <begin position="386"/>
        <end position="389"/>
    </location>
</feature>
<feature type="strand" evidence="5">
    <location>
        <begin position="391"/>
        <end position="393"/>
    </location>
</feature>
<feature type="strand" evidence="5">
    <location>
        <begin position="400"/>
        <end position="402"/>
    </location>
</feature>
<feature type="helix" evidence="5">
    <location>
        <begin position="412"/>
        <end position="428"/>
    </location>
</feature>
<feature type="helix" evidence="5">
    <location>
        <begin position="431"/>
        <end position="433"/>
    </location>
</feature>
<feature type="turn" evidence="5">
    <location>
        <begin position="434"/>
        <end position="436"/>
    </location>
</feature>
<feature type="strand" evidence="5">
    <location>
        <begin position="437"/>
        <end position="443"/>
    </location>
</feature>
<feature type="helix" evidence="5">
    <location>
        <begin position="450"/>
        <end position="460"/>
    </location>
</feature>
<feature type="strand" evidence="7">
    <location>
        <begin position="487"/>
        <end position="489"/>
    </location>
</feature>
<feature type="strand" evidence="5">
    <location>
        <begin position="492"/>
        <end position="497"/>
    </location>
</feature>
<feature type="helix" evidence="5">
    <location>
        <begin position="500"/>
        <end position="502"/>
    </location>
</feature>
<feature type="helix" evidence="5">
    <location>
        <begin position="512"/>
        <end position="525"/>
    </location>
</feature>
<keyword id="KW-0002">3D-structure</keyword>
<keyword id="KW-0274">FAD</keyword>
<keyword id="KW-0285">Flavoprotein</keyword>
<keyword id="KW-0547">Nucleotide-binding</keyword>
<keyword id="KW-0560">Oxidoreductase</keyword>
<keyword id="KW-0346">Stress response</keyword>
<protein>
    <recommendedName>
        <fullName>Choline oxidase</fullName>
        <ecNumber>1.1.3.17</ecNumber>
    </recommendedName>
</protein>
<gene>
    <name type="primary">codA</name>
</gene>
<reference key="1">
    <citation type="journal article" date="1995" name="Plant Mol. Biol.">
        <title>Transformation of Synechococcus with a gene for choline oxidase enhances tolerance to salt stress.</title>
        <authorList>
            <person name="Deshnium P."/>
            <person name="Los D.A."/>
            <person name="Hayashi H."/>
            <person name="Mustardy L."/>
            <person name="Murata N."/>
        </authorList>
    </citation>
    <scope>NUCLEOTIDE SEQUENCE [GENOMIC DNA]</scope>
</reference>
<reference key="2">
    <citation type="journal article" date="2004" name="Arch. Biochem. Biophys.">
        <title>Cloning, sequence analysis, and purification of choline oxidase from Arthrobacter globiformis: a bacterial enzyme involved in osmotic stress tolerance.</title>
        <authorList>
            <person name="Fan F."/>
            <person name="Ghanem M."/>
            <person name="Gadda G."/>
        </authorList>
    </citation>
    <scope>NUCLEOTIDE SEQUENCE [GENOMIC DNA]</scope>
    <scope>SUBUNIT</scope>
    <scope>MASS SPECTROMETRY</scope>
    <scope>BIOPHYSICOCHEMICAL PROPERTIES</scope>
    <source>
        <strain>ATCC 8010 / DSM 20124 / BCRC 10598 / JCM 1332 / KCTC 9101 / NBRC 12137 / NCIMB 8907 / NRRL B-2979 / 168</strain>
    </source>
</reference>
<reference key="3">
    <citation type="journal article" date="2009" name="Plant Physiol. Biochem.">
        <title>Targeting prokaryotic choline oxidase into chloroplasts enhance the potential of photosynthetic machinery of plants to withstand oxidative damage.</title>
        <authorList>
            <person name="Sharmila P."/>
            <person name="Phanindra M.L."/>
            <person name="Anwar F."/>
            <person name="Singh K."/>
            <person name="Gupta S."/>
            <person name="Pardha Saradhi P."/>
        </authorList>
    </citation>
    <scope>NUCLEOTIDE SEQUENCE [GENOMIC DNA]</scope>
    <source>
        <strain>MTCC 944</strain>
    </source>
</reference>
<reference key="4">
    <citation type="journal article" date="2003" name="Biochemistry">
        <title>Structural characterization and mapping of the covalently linked FAD cofactor in choline oxidase from Arthrobacter globiformis.</title>
        <authorList>
            <person name="Rand T."/>
            <person name="Halkier T."/>
            <person name="Hansen O.C."/>
        </authorList>
    </citation>
    <scope>FUNCTION</scope>
    <scope>COFACTOR</scope>
</reference>
<reference key="5">
    <citation type="journal article" date="2008" name="Biochemistry">
        <title>Role of Glu312 in binding and positioning of the substrate for the hydride transfer reaction in choline oxidase.</title>
        <authorList>
            <person name="Quaye O."/>
            <person name="Lountos G.T."/>
            <person name="Fan F."/>
            <person name="Orville A.M."/>
            <person name="Gadda G."/>
        </authorList>
    </citation>
    <scope>X-RAY CRYSTALLOGRAPHY (1.86 ANGSTROMS)</scope>
    <source>
        <strain>ATCC 8010 / DSM 20124 / BCRC 10598 / JCM 1332 / KCTC 9101 / NBRC 12137 / NCIMB 8907 / NRRL B-2979 / 168</strain>
    </source>
</reference>
<reference key="6">
    <citation type="journal article" date="2010" name="Arch. Biochem. Biophys.">
        <title>Structural and kinetic studies on the Ser101Ala variant of choline oxidase: catalysis by compromise.</title>
        <authorList>
            <person name="Finnegan S."/>
            <person name="Yuan H."/>
            <person name="Wang Y.F."/>
            <person name="Orville A.M."/>
            <person name="Weber I.T."/>
            <person name="Gadda G."/>
        </authorList>
    </citation>
    <scope>X-RAY CRYSTALLOGRAPHY (2.47 ANGSTROMS) OF MUTANT ALA-101</scope>
</reference>
<reference key="7">
    <citation type="journal article" date="2010" name="Biochemistry">
        <title>Role of valine 464 in the flavin oxidation reaction catalyzed by choline oxidase.</title>
        <authorList>
            <person name="Finnegan S."/>
            <person name="Agniswamy J."/>
            <person name="Weber I.T."/>
            <person name="Gadda G."/>
        </authorList>
    </citation>
    <scope>X-RAY CRYSTALLOGRAPHY (2.20 ANGSTROMS) OF MUTANT ALA-464</scope>
</reference>
<accession>Q7X2H8</accession>
<accession>Q59117</accession>
<accession>Q6PPA2</accession>
<proteinExistence type="evidence at protein level"/>
<name>CHOX_ARTGO</name>
<comment type="function">
    <text evidence="2">Catalyzes the two-step oxidative conversion of choline to glycine-betaine with betaine aldehyde as an intermediate. Glycine-betaine accumulates to high levels in the cytoplasm of cells to prevent dehydration and plasmolysis in adverse hyperosmotic environments. Accepts either choline or the reaction intermediate betaine-aldehyde as substrate.</text>
</comment>
<comment type="catalytic activity">
    <reaction>
        <text>choline + 2 O2 + H2O = glycine betaine + 2 H2O2 + H(+)</text>
        <dbReference type="Rhea" id="RHEA:11536"/>
        <dbReference type="ChEBI" id="CHEBI:15354"/>
        <dbReference type="ChEBI" id="CHEBI:15377"/>
        <dbReference type="ChEBI" id="CHEBI:15378"/>
        <dbReference type="ChEBI" id="CHEBI:15379"/>
        <dbReference type="ChEBI" id="CHEBI:16240"/>
        <dbReference type="ChEBI" id="CHEBI:17750"/>
        <dbReference type="EC" id="1.1.3.17"/>
    </reaction>
</comment>
<comment type="cofactor">
    <cofactor evidence="2">
        <name>FAD</name>
        <dbReference type="ChEBI" id="CHEBI:57692"/>
    </cofactor>
</comment>
<comment type="biophysicochemical properties">
    <kinetics>
        <KM evidence="3">0.6 mM for choline</KM>
        <KM evidence="3">2.3 mM for betaine aldehyde</KM>
        <text>kcat is 13.4 sec(-1) with choline as substrate and 11.6 sec(-1) with betaine aldehyde as substrate.</text>
    </kinetics>
</comment>
<comment type="pathway">
    <text>Amine and polyamine biosynthesis; betaine biosynthesis via choline pathway; betaine from choline: step 1/1.</text>
</comment>
<comment type="subunit">
    <text evidence="3">Homodimer.</text>
</comment>
<comment type="mass spectrometry">
    <text>Mass of the protein with one linked FAD moiety.</text>
</comment>
<comment type="similarity">
    <text evidence="4">Belongs to the GMC oxidoreductase family.</text>
</comment>
<evidence type="ECO:0000250" key="1">
    <source>
        <dbReference type="UniProtKB" id="E4QP00"/>
    </source>
</evidence>
<evidence type="ECO:0000269" key="2">
    <source>
    </source>
</evidence>
<evidence type="ECO:0000269" key="3">
    <source>
    </source>
</evidence>
<evidence type="ECO:0000305" key="4"/>
<evidence type="ECO:0007829" key="5">
    <source>
        <dbReference type="PDB" id="2JBV"/>
    </source>
</evidence>
<evidence type="ECO:0007829" key="6">
    <source>
        <dbReference type="PDB" id="3LJP"/>
    </source>
</evidence>
<evidence type="ECO:0007829" key="7">
    <source>
        <dbReference type="PDB" id="3NNE"/>
    </source>
</evidence>
<evidence type="ECO:0007829" key="8">
    <source>
        <dbReference type="PDB" id="4MJW"/>
    </source>
</evidence>
<organism>
    <name type="scientific">Arthrobacter globiformis</name>
    <dbReference type="NCBI Taxonomy" id="1665"/>
    <lineage>
        <taxon>Bacteria</taxon>
        <taxon>Bacillati</taxon>
        <taxon>Actinomycetota</taxon>
        <taxon>Actinomycetes</taxon>
        <taxon>Micrococcales</taxon>
        <taxon>Micrococcaceae</taxon>
        <taxon>Arthrobacter</taxon>
    </lineage>
</organism>